<protein>
    <recommendedName>
        <fullName>Wee1-like protein kinase 2-B</fullName>
        <ecNumber>2.7.10.2</ecNumber>
    </recommendedName>
    <alternativeName>
        <fullName>Wee1-like protein kinase 1</fullName>
    </alternativeName>
    <alternativeName>
        <fullName>Xe-wee1</fullName>
    </alternativeName>
</protein>
<comment type="function">
    <text evidence="7">Oocyte and early embryo-specific protein tyrosine kinase that phosphorylates and inhibits cdk1 and acts as a regulator of meiosis in oocytes. Required to ensure the meiotic cell cycle in oocytes by phosphorylating cdk1 at 'Tyr-15', leading to inhibit cdk1 activity and prevent meiosis.</text>
</comment>
<comment type="catalytic activity">
    <reaction evidence="4 7">
        <text>L-tyrosyl-[protein] + ATP = O-phospho-L-tyrosyl-[protein] + ADP + H(+)</text>
        <dbReference type="Rhea" id="RHEA:10596"/>
        <dbReference type="Rhea" id="RHEA-COMP:10136"/>
        <dbReference type="Rhea" id="RHEA-COMP:20101"/>
        <dbReference type="ChEBI" id="CHEBI:15378"/>
        <dbReference type="ChEBI" id="CHEBI:30616"/>
        <dbReference type="ChEBI" id="CHEBI:46858"/>
        <dbReference type="ChEBI" id="CHEBI:61978"/>
        <dbReference type="ChEBI" id="CHEBI:456216"/>
        <dbReference type="EC" id="2.7.10.2"/>
    </reaction>
</comment>
<comment type="subunit">
    <text evidence="6">Interacts with cdca3.</text>
</comment>
<comment type="subcellular location">
    <subcellularLocation>
        <location evidence="1">Nucleus</location>
    </subcellularLocation>
</comment>
<comment type="developmental stage">
    <text evidence="7">Absent in stage VI oocytes and is expressed from meiosis II until gastrulation.</text>
</comment>
<comment type="PTM">
    <text evidence="6">Ubiquitinated and degraded at the onset of G2/M phase.</text>
</comment>
<comment type="PTM">
    <text evidence="6">Phosphorylated during M and G1 phases. Interacts with cdca3 when phosphorylated at Ser-38.</text>
</comment>
<comment type="similarity">
    <text evidence="3">Belongs to the protein kinase superfamily. Ser/Thr protein kinase family. WEE1 subfamily.</text>
</comment>
<comment type="caution">
    <text evidence="9">Was initially assigned as wee1 (PubMed:9486797). However, it corresponds to the meiosis-specific protein WEE2 in mammals.</text>
</comment>
<organism>
    <name type="scientific">Xenopus laevis</name>
    <name type="common">African clawed frog</name>
    <dbReference type="NCBI Taxonomy" id="8355"/>
    <lineage>
        <taxon>Eukaryota</taxon>
        <taxon>Metazoa</taxon>
        <taxon>Chordata</taxon>
        <taxon>Craniata</taxon>
        <taxon>Vertebrata</taxon>
        <taxon>Euteleostomi</taxon>
        <taxon>Amphibia</taxon>
        <taxon>Batrachia</taxon>
        <taxon>Anura</taxon>
        <taxon>Pipoidea</taxon>
        <taxon>Pipidae</taxon>
        <taxon>Xenopodinae</taxon>
        <taxon>Xenopus</taxon>
        <taxon>Xenopus</taxon>
    </lineage>
</organism>
<keyword id="KW-0067">ATP-binding</keyword>
<keyword id="KW-0175">Coiled coil</keyword>
<keyword id="KW-0418">Kinase</keyword>
<keyword id="KW-0460">Magnesium</keyword>
<keyword id="KW-0469">Meiosis</keyword>
<keyword id="KW-0479">Metal-binding</keyword>
<keyword id="KW-0547">Nucleotide-binding</keyword>
<keyword id="KW-0539">Nucleus</keyword>
<keyword id="KW-0597">Phosphoprotein</keyword>
<keyword id="KW-1185">Reference proteome</keyword>
<keyword id="KW-0808">Transferase</keyword>
<keyword id="KW-0829">Tyrosine-protein kinase</keyword>
<keyword id="KW-0832">Ubl conjugation</keyword>
<sequence>MRMAMSCGGRLVQRLDFSSSEEEDGLSNRINEAPQKGSPVSSWRTNNCPFPITPQRNERGLSPTQELSPSSDYSPDPSDKGVGGECPGTPLHYSTWKKLKLCDTPYTPKSLLYKTLPSPGSRVHCRGQRLLRFVAGTGAETEDPTLVNVNPFTPQSYRQTHFQPNGKRKERPEDDCSSDSQMKFTDKEHPAVFQSKRFVLRETNMESRYKTEFLEIEKIGAGEFGSVFKCVKRLDGCFYVIKRSKKPLAGSTDEQLALREVYAHAVLGHHPHVVRYYSAWAEDDHMIIQNEYCNGGSLQDLIMENNKKGQFVPEQELKEILLQVSMGLKYIHGSGLVHMDIKPSNIFICRKQTEVGEDESDGEDDVASASVLYKIGDLGHVTSILNPQVEEGDSRFLANEILQEDYRQLPKADIFALGLTIALAAGAAPLPCNEDGWHHIRKGNLPHIPQPLTPAFLALLKLLVHPDPATRPPATSLAKNSVLRRCVGKAAELQKQLNVEKFKTAMLERELQAAKLAQDECLDLPPVSGFSCRGRKRLVGAKNARSLSFTCGGY</sequence>
<reference key="1">
    <citation type="journal article" date="1998" name="Development">
        <title>Analysis of the early embryonic cell cycles of Xenopus; regulation of cell cycle length by Xe-wee1 and Mos.</title>
        <authorList>
            <person name="Murakami M.S."/>
            <person name="Vande Woude G.F."/>
        </authorList>
    </citation>
    <scope>NUCLEOTIDE SEQUENCE [MRNA]</scope>
    <scope>FUNCTION</scope>
    <scope>CATALYTIC ACTIVITY</scope>
    <scope>TISSUE SPECIFICITY</scope>
    <scope>DEVELOPMENTAL STAGE</scope>
    <scope>MUTAGENESIS OF LYS-242</scope>
</reference>
<reference key="2">
    <citation type="submission" date="2008-11" db="EMBL/GenBank/DDBJ databases">
        <authorList>
            <consortium name="NIH - Xenopus Gene Collection (XGC) project"/>
        </authorList>
    </citation>
    <scope>NUCLEOTIDE SEQUENCE [LARGE SCALE MRNA]</scope>
    <source>
        <tissue>Gastrula</tissue>
    </source>
</reference>
<reference key="3">
    <citation type="journal article" date="2003" name="Cell">
        <title>Tome-1, a trigger of mitotic entry, is degraded during G1 via the APC.</title>
        <authorList>
            <person name="Ayad N.G."/>
            <person name="Rankin S."/>
            <person name="Murakami M."/>
            <person name="Jebanathirajah J."/>
            <person name="Gygi S.P."/>
            <person name="Kirschner M.W."/>
        </authorList>
    </citation>
    <scope>PHOSPHORYLATION AT SER-38</scope>
    <scope>UBIQUITINATION</scope>
    <scope>INTERACTION WITH CDCA3</scope>
    <scope>MUTAGENESIS OF SER-38</scope>
</reference>
<evidence type="ECO:0000250" key="1"/>
<evidence type="ECO:0000255" key="2"/>
<evidence type="ECO:0000255" key="3">
    <source>
        <dbReference type="PROSITE-ProRule" id="PRU00159"/>
    </source>
</evidence>
<evidence type="ECO:0000255" key="4">
    <source>
        <dbReference type="PROSITE-ProRule" id="PRU10027"/>
    </source>
</evidence>
<evidence type="ECO:0000256" key="5">
    <source>
        <dbReference type="SAM" id="MobiDB-lite"/>
    </source>
</evidence>
<evidence type="ECO:0000269" key="6">
    <source>
    </source>
</evidence>
<evidence type="ECO:0000269" key="7">
    <source>
    </source>
</evidence>
<evidence type="ECO:0000305" key="8"/>
<evidence type="ECO:0000305" key="9">
    <source>
    </source>
</evidence>
<name>WEE2B_XENLA</name>
<dbReference type="EC" id="2.7.10.2"/>
<dbReference type="EMBL" id="AF035443">
    <property type="protein sequence ID" value="AAB99952.1"/>
    <property type="molecule type" value="mRNA"/>
</dbReference>
<dbReference type="EMBL" id="BC169846">
    <property type="protein sequence ID" value="AAI69846.1"/>
    <property type="molecule type" value="mRNA"/>
</dbReference>
<dbReference type="EMBL" id="BC169848">
    <property type="protein sequence ID" value="AAI69848.1"/>
    <property type="molecule type" value="mRNA"/>
</dbReference>
<dbReference type="RefSeq" id="NP_001081724.1">
    <property type="nucleotide sequence ID" value="NM_001088255.1"/>
</dbReference>
<dbReference type="SMR" id="O57473"/>
<dbReference type="iPTMnet" id="O57473"/>
<dbReference type="GeneID" id="398017"/>
<dbReference type="KEGG" id="xla:398017"/>
<dbReference type="AGR" id="Xenbase:XB-GENE-17333442"/>
<dbReference type="CTD" id="398017"/>
<dbReference type="Xenbase" id="XB-GENE-17333442">
    <property type="gene designation" value="wee2.S"/>
</dbReference>
<dbReference type="OrthoDB" id="5337378at2759"/>
<dbReference type="Proteomes" id="UP000186698">
    <property type="component" value="Chromosome 3S"/>
</dbReference>
<dbReference type="Bgee" id="398017">
    <property type="expression patterns" value="Expressed in egg cell and 8 other cell types or tissues"/>
</dbReference>
<dbReference type="GO" id="GO:0005737">
    <property type="term" value="C:cytoplasm"/>
    <property type="evidence" value="ECO:0000318"/>
    <property type="project" value="GO_Central"/>
</dbReference>
<dbReference type="GO" id="GO:0005634">
    <property type="term" value="C:nucleus"/>
    <property type="evidence" value="ECO:0000318"/>
    <property type="project" value="GO_Central"/>
</dbReference>
<dbReference type="GO" id="GO:0005524">
    <property type="term" value="F:ATP binding"/>
    <property type="evidence" value="ECO:0007669"/>
    <property type="project" value="UniProtKB-KW"/>
</dbReference>
<dbReference type="GO" id="GO:0000287">
    <property type="term" value="F:magnesium ion binding"/>
    <property type="evidence" value="ECO:0007669"/>
    <property type="project" value="InterPro"/>
</dbReference>
<dbReference type="GO" id="GO:0004715">
    <property type="term" value="F:non-membrane spanning protein tyrosine kinase activity"/>
    <property type="evidence" value="ECO:0007669"/>
    <property type="project" value="UniProtKB-EC"/>
</dbReference>
<dbReference type="GO" id="GO:0004713">
    <property type="term" value="F:protein tyrosine kinase activity"/>
    <property type="evidence" value="ECO:0000318"/>
    <property type="project" value="GO_Central"/>
</dbReference>
<dbReference type="GO" id="GO:0051321">
    <property type="term" value="P:meiotic cell cycle"/>
    <property type="evidence" value="ECO:0007669"/>
    <property type="project" value="UniProtKB-KW"/>
</dbReference>
<dbReference type="GO" id="GO:0000278">
    <property type="term" value="P:mitotic cell cycle"/>
    <property type="evidence" value="ECO:0007669"/>
    <property type="project" value="InterPro"/>
</dbReference>
<dbReference type="GO" id="GO:0060631">
    <property type="term" value="P:regulation of meiosis I"/>
    <property type="evidence" value="ECO:0000318"/>
    <property type="project" value="GO_Central"/>
</dbReference>
<dbReference type="FunFam" id="3.30.200.20:FF:000115">
    <property type="entry name" value="Wee1-like kinase 2"/>
    <property type="match status" value="1"/>
</dbReference>
<dbReference type="FunFam" id="1.10.510.10:FF:000217">
    <property type="entry name" value="Wee1-like protein kinase"/>
    <property type="match status" value="1"/>
</dbReference>
<dbReference type="Gene3D" id="3.30.200.20">
    <property type="entry name" value="Phosphorylase Kinase, domain 1"/>
    <property type="match status" value="1"/>
</dbReference>
<dbReference type="Gene3D" id="1.10.510.10">
    <property type="entry name" value="Transferase(Phosphotransferase) domain 1"/>
    <property type="match status" value="1"/>
</dbReference>
<dbReference type="InterPro" id="IPR050339">
    <property type="entry name" value="CC_SR_Kinase"/>
</dbReference>
<dbReference type="InterPro" id="IPR011009">
    <property type="entry name" value="Kinase-like_dom_sf"/>
</dbReference>
<dbReference type="InterPro" id="IPR000719">
    <property type="entry name" value="Prot_kinase_dom"/>
</dbReference>
<dbReference type="InterPro" id="IPR017441">
    <property type="entry name" value="Protein_kinase_ATP_BS"/>
</dbReference>
<dbReference type="InterPro" id="IPR008271">
    <property type="entry name" value="Ser/Thr_kinase_AS"/>
</dbReference>
<dbReference type="InterPro" id="IPR017164">
    <property type="entry name" value="Wee1-like_protein_kinase"/>
</dbReference>
<dbReference type="PANTHER" id="PTHR11042">
    <property type="entry name" value="EUKARYOTIC TRANSLATION INITIATION FACTOR 2-ALPHA KINASE EIF2-ALPHA KINASE -RELATED"/>
    <property type="match status" value="1"/>
</dbReference>
<dbReference type="PANTHER" id="PTHR11042:SF75">
    <property type="entry name" value="WEE1-LIKE PROTEIN KINASE 2"/>
    <property type="match status" value="1"/>
</dbReference>
<dbReference type="Pfam" id="PF00069">
    <property type="entry name" value="Pkinase"/>
    <property type="match status" value="1"/>
</dbReference>
<dbReference type="PIRSF" id="PIRSF037281">
    <property type="entry name" value="Wee1-like_protein_kinase"/>
    <property type="match status" value="1"/>
</dbReference>
<dbReference type="SMART" id="SM00220">
    <property type="entry name" value="S_TKc"/>
    <property type="match status" value="1"/>
</dbReference>
<dbReference type="SUPFAM" id="SSF56112">
    <property type="entry name" value="Protein kinase-like (PK-like)"/>
    <property type="match status" value="1"/>
</dbReference>
<dbReference type="PROSITE" id="PS00107">
    <property type="entry name" value="PROTEIN_KINASE_ATP"/>
    <property type="match status" value="1"/>
</dbReference>
<dbReference type="PROSITE" id="PS50011">
    <property type="entry name" value="PROTEIN_KINASE_DOM"/>
    <property type="match status" value="1"/>
</dbReference>
<dbReference type="PROSITE" id="PS00108">
    <property type="entry name" value="PROTEIN_KINASE_ST"/>
    <property type="match status" value="1"/>
</dbReference>
<feature type="chain" id="PRO_0000409529" description="Wee1-like protein kinase 2-B">
    <location>
        <begin position="1"/>
        <end position="554"/>
    </location>
</feature>
<feature type="domain" description="Protein kinase" evidence="3">
    <location>
        <begin position="213"/>
        <end position="487"/>
    </location>
</feature>
<feature type="region of interest" description="Disordered" evidence="5">
    <location>
        <begin position="1"/>
        <end position="86"/>
    </location>
</feature>
<feature type="region of interest" description="Disordered" evidence="5">
    <location>
        <begin position="145"/>
        <end position="182"/>
    </location>
</feature>
<feature type="coiled-coil region" evidence="2">
    <location>
        <begin position="490"/>
        <end position="516"/>
    </location>
</feature>
<feature type="compositionally biased region" description="Polar residues" evidence="5">
    <location>
        <begin position="38"/>
        <end position="48"/>
    </location>
</feature>
<feature type="compositionally biased region" description="Polar residues" evidence="5">
    <location>
        <begin position="147"/>
        <end position="163"/>
    </location>
</feature>
<feature type="active site" description="Proton acceptor" evidence="3 4">
    <location>
        <position position="340"/>
    </location>
</feature>
<feature type="binding site" evidence="3">
    <location>
        <begin position="219"/>
        <end position="227"/>
    </location>
    <ligand>
        <name>ATP</name>
        <dbReference type="ChEBI" id="CHEBI:30616"/>
    </ligand>
</feature>
<feature type="binding site" evidence="3">
    <location>
        <position position="242"/>
    </location>
    <ligand>
        <name>ATP</name>
        <dbReference type="ChEBI" id="CHEBI:30616"/>
    </ligand>
</feature>
<feature type="binding site" evidence="1">
    <location>
        <position position="345"/>
    </location>
    <ligand>
        <name>Mg(2+)</name>
        <dbReference type="ChEBI" id="CHEBI:18420"/>
    </ligand>
</feature>
<feature type="binding site" evidence="1">
    <location>
        <position position="377"/>
    </location>
    <ligand>
        <name>Mg(2+)</name>
        <dbReference type="ChEBI" id="CHEBI:18420"/>
    </ligand>
</feature>
<feature type="modified residue" description="Phosphoserine" evidence="6">
    <location>
        <position position="38"/>
    </location>
</feature>
<feature type="mutagenesis site" description="Strongly reduces the interaction with cdca3." evidence="6">
    <original>S</original>
    <variation>A</variation>
    <location>
        <position position="38"/>
    </location>
</feature>
<feature type="mutagenesis site" description="Dominant-negative mutant; reduces the level of cdk1 tyrosine phosphorylation and shortened the length of the cell cycle." evidence="7">
    <original>K</original>
    <variation>M</variation>
    <location>
        <position position="242"/>
    </location>
</feature>
<feature type="sequence conflict" description="In Ref. 2; AAI69848/AAI69846." evidence="8" ref="2">
    <original>P</original>
    <variation>S</variation>
    <location>
        <position position="190"/>
    </location>
</feature>
<feature type="sequence conflict" description="In Ref. 2; AAI69848/AAI69846." evidence="8" ref="2">
    <original>A</original>
    <variation>S</variation>
    <location>
        <position position="367"/>
    </location>
</feature>
<feature type="sequence conflict" description="In Ref. 2; AAI69848/AAI69846." evidence="8" ref="2">
    <original>A</original>
    <variation>V</variation>
    <location>
        <position position="469"/>
    </location>
</feature>
<feature type="sequence conflict" description="In Ref. 2; AAI69848/AAI69846." evidence="8" ref="2">
    <original>T</original>
    <variation>A</variation>
    <location>
        <position position="475"/>
    </location>
</feature>
<proteinExistence type="evidence at protein level"/>
<gene>
    <name type="primary">wee2-b</name>
    <name type="synonym">wee1</name>
</gene>
<accession>O57473</accession>
<accession>B7ZQL0</accession>